<reference key="1">
    <citation type="journal article" date="2004" name="Proc. Natl. Acad. Sci. U.S.A.">
        <title>Insights into the evolution of Yersinia pestis through whole-genome comparison with Yersinia pseudotuberculosis.</title>
        <authorList>
            <person name="Chain P.S.G."/>
            <person name="Carniel E."/>
            <person name="Larimer F.W."/>
            <person name="Lamerdin J."/>
            <person name="Stoutland P.O."/>
            <person name="Regala W.M."/>
            <person name="Georgescu A.M."/>
            <person name="Vergez L.M."/>
            <person name="Land M.L."/>
            <person name="Motin V.L."/>
            <person name="Brubaker R.R."/>
            <person name="Fowler J."/>
            <person name="Hinnebusch J."/>
            <person name="Marceau M."/>
            <person name="Medigue C."/>
            <person name="Simonet M."/>
            <person name="Chenal-Francisque V."/>
            <person name="Souza B."/>
            <person name="Dacheux D."/>
            <person name="Elliott J.M."/>
            <person name="Derbise A."/>
            <person name="Hauser L.J."/>
            <person name="Garcia E."/>
        </authorList>
    </citation>
    <scope>NUCLEOTIDE SEQUENCE [LARGE SCALE GENOMIC DNA]</scope>
    <source>
        <strain>IP32953</strain>
    </source>
</reference>
<feature type="chain" id="PRO_0000091769" description="3-hydroxyacyl-[acyl-carrier-protein] dehydratase FabZ">
    <location>
        <begin position="1"/>
        <end position="176"/>
    </location>
</feature>
<feature type="active site" evidence="1">
    <location>
        <position position="54"/>
    </location>
</feature>
<protein>
    <recommendedName>
        <fullName evidence="1">3-hydroxyacyl-[acyl-carrier-protein] dehydratase FabZ</fullName>
        <ecNumber evidence="1">4.2.1.59</ecNumber>
    </recommendedName>
    <alternativeName>
        <fullName evidence="1">(3R)-hydroxymyristoyl-[acyl-carrier-protein] dehydratase</fullName>
        <shortName evidence="1">(3R)-hydroxymyristoyl-ACP dehydrase</shortName>
    </alternativeName>
    <alternativeName>
        <fullName evidence="1">Beta-hydroxyacyl-ACP dehydratase</fullName>
    </alternativeName>
</protein>
<accession>Q667K0</accession>
<proteinExistence type="inferred from homology"/>
<gene>
    <name evidence="1" type="primary">fabZ</name>
    <name type="ordered locus">YPTB2992</name>
</gene>
<organism>
    <name type="scientific">Yersinia pseudotuberculosis serotype I (strain IP32953)</name>
    <dbReference type="NCBI Taxonomy" id="273123"/>
    <lineage>
        <taxon>Bacteria</taxon>
        <taxon>Pseudomonadati</taxon>
        <taxon>Pseudomonadota</taxon>
        <taxon>Gammaproteobacteria</taxon>
        <taxon>Enterobacterales</taxon>
        <taxon>Yersiniaceae</taxon>
        <taxon>Yersinia</taxon>
    </lineage>
</organism>
<sequence length="176" mass="19631">MTTDTHTLHIEEILDLLPHRFPFLLVDRVLDFEEGKFLRAVKNVSFNEPFFQGHFPGKPIFPGVLILEAMAQATGILAFKSRGKLEPGELYYFAGIDEARFKRPVVPGDQMIMEVEFVKERRGLTRFTGVAKVDGEIVCTATMMCARSKPAAPAESVVVKPDVVKPDVVNPVVKES</sequence>
<comment type="function">
    <text evidence="1">Involved in unsaturated fatty acids biosynthesis. Catalyzes the dehydration of short chain beta-hydroxyacyl-ACPs and long chain saturated and unsaturated beta-hydroxyacyl-ACPs.</text>
</comment>
<comment type="catalytic activity">
    <reaction evidence="1">
        <text>a (3R)-hydroxyacyl-[ACP] = a (2E)-enoyl-[ACP] + H2O</text>
        <dbReference type="Rhea" id="RHEA:13097"/>
        <dbReference type="Rhea" id="RHEA-COMP:9925"/>
        <dbReference type="Rhea" id="RHEA-COMP:9945"/>
        <dbReference type="ChEBI" id="CHEBI:15377"/>
        <dbReference type="ChEBI" id="CHEBI:78784"/>
        <dbReference type="ChEBI" id="CHEBI:78827"/>
        <dbReference type="EC" id="4.2.1.59"/>
    </reaction>
</comment>
<comment type="subcellular location">
    <subcellularLocation>
        <location evidence="1">Cytoplasm</location>
    </subcellularLocation>
</comment>
<comment type="similarity">
    <text evidence="1">Belongs to the thioester dehydratase family. FabZ subfamily.</text>
</comment>
<name>FABZ_YERPS</name>
<evidence type="ECO:0000255" key="1">
    <source>
        <dbReference type="HAMAP-Rule" id="MF_00406"/>
    </source>
</evidence>
<dbReference type="EC" id="4.2.1.59" evidence="1"/>
<dbReference type="EMBL" id="BX936398">
    <property type="protein sequence ID" value="CAH22230.1"/>
    <property type="molecule type" value="Genomic_DNA"/>
</dbReference>
<dbReference type="RefSeq" id="WP_002217656.1">
    <property type="nucleotide sequence ID" value="NZ_CP009712.1"/>
</dbReference>
<dbReference type="SMR" id="Q667K0"/>
<dbReference type="KEGG" id="ypo:BZ17_3629"/>
<dbReference type="KEGG" id="yps:YPTB2992"/>
<dbReference type="PATRIC" id="fig|273123.14.peg.3810"/>
<dbReference type="Proteomes" id="UP000001011">
    <property type="component" value="Chromosome"/>
</dbReference>
<dbReference type="GO" id="GO:0005737">
    <property type="term" value="C:cytoplasm"/>
    <property type="evidence" value="ECO:0007669"/>
    <property type="project" value="UniProtKB-SubCell"/>
</dbReference>
<dbReference type="GO" id="GO:0016020">
    <property type="term" value="C:membrane"/>
    <property type="evidence" value="ECO:0007669"/>
    <property type="project" value="GOC"/>
</dbReference>
<dbReference type="GO" id="GO:0019171">
    <property type="term" value="F:(3R)-hydroxyacyl-[acyl-carrier-protein] dehydratase activity"/>
    <property type="evidence" value="ECO:0007669"/>
    <property type="project" value="UniProtKB-EC"/>
</dbReference>
<dbReference type="GO" id="GO:0006633">
    <property type="term" value="P:fatty acid biosynthetic process"/>
    <property type="evidence" value="ECO:0007669"/>
    <property type="project" value="UniProtKB-UniRule"/>
</dbReference>
<dbReference type="GO" id="GO:0009245">
    <property type="term" value="P:lipid A biosynthetic process"/>
    <property type="evidence" value="ECO:0007669"/>
    <property type="project" value="UniProtKB-UniRule"/>
</dbReference>
<dbReference type="CDD" id="cd01288">
    <property type="entry name" value="FabZ"/>
    <property type="match status" value="1"/>
</dbReference>
<dbReference type="FunFam" id="3.10.129.10:FF:000001">
    <property type="entry name" value="3-hydroxyacyl-[acyl-carrier-protein] dehydratase FabZ"/>
    <property type="match status" value="1"/>
</dbReference>
<dbReference type="Gene3D" id="3.10.129.10">
    <property type="entry name" value="Hotdog Thioesterase"/>
    <property type="match status" value="1"/>
</dbReference>
<dbReference type="HAMAP" id="MF_00406">
    <property type="entry name" value="FabZ"/>
    <property type="match status" value="1"/>
</dbReference>
<dbReference type="InterPro" id="IPR013114">
    <property type="entry name" value="FabA_FabZ"/>
</dbReference>
<dbReference type="InterPro" id="IPR010084">
    <property type="entry name" value="FabZ"/>
</dbReference>
<dbReference type="InterPro" id="IPR029069">
    <property type="entry name" value="HotDog_dom_sf"/>
</dbReference>
<dbReference type="NCBIfam" id="TIGR01750">
    <property type="entry name" value="fabZ"/>
    <property type="match status" value="1"/>
</dbReference>
<dbReference type="NCBIfam" id="NF000582">
    <property type="entry name" value="PRK00006.1"/>
    <property type="match status" value="1"/>
</dbReference>
<dbReference type="PANTHER" id="PTHR30272">
    <property type="entry name" value="3-HYDROXYACYL-[ACYL-CARRIER-PROTEIN] DEHYDRATASE"/>
    <property type="match status" value="1"/>
</dbReference>
<dbReference type="PANTHER" id="PTHR30272:SF1">
    <property type="entry name" value="3-HYDROXYACYL-[ACYL-CARRIER-PROTEIN] DEHYDRATASE"/>
    <property type="match status" value="1"/>
</dbReference>
<dbReference type="Pfam" id="PF07977">
    <property type="entry name" value="FabA"/>
    <property type="match status" value="1"/>
</dbReference>
<dbReference type="SUPFAM" id="SSF54637">
    <property type="entry name" value="Thioesterase/thiol ester dehydrase-isomerase"/>
    <property type="match status" value="1"/>
</dbReference>
<keyword id="KW-0963">Cytoplasm</keyword>
<keyword id="KW-0441">Lipid A biosynthesis</keyword>
<keyword id="KW-0444">Lipid biosynthesis</keyword>
<keyword id="KW-0443">Lipid metabolism</keyword>
<keyword id="KW-0456">Lyase</keyword>